<evidence type="ECO:0000255" key="1">
    <source>
        <dbReference type="HAMAP-Rule" id="MF_00456"/>
    </source>
</evidence>
<protein>
    <recommendedName>
        <fullName evidence="1">Glutamate 5-kinase</fullName>
        <ecNumber evidence="1">2.7.2.11</ecNumber>
    </recommendedName>
    <alternativeName>
        <fullName evidence="1">Gamma-glutamyl kinase</fullName>
        <shortName evidence="1">GK</shortName>
    </alternativeName>
</protein>
<gene>
    <name evidence="1" type="primary">proB</name>
    <name type="ordered locus">Ecok1_02490</name>
    <name type="ORF">APECO1_1727</name>
</gene>
<dbReference type="EC" id="2.7.2.11" evidence="1"/>
<dbReference type="EMBL" id="CP000468">
    <property type="protein sequence ID" value="ABI99742.1"/>
    <property type="molecule type" value="Genomic_DNA"/>
</dbReference>
<dbReference type="RefSeq" id="WP_001285288.1">
    <property type="nucleotide sequence ID" value="NZ_CADILS010000061.1"/>
</dbReference>
<dbReference type="SMR" id="A1A7V3"/>
<dbReference type="GeneID" id="93777151"/>
<dbReference type="KEGG" id="ecv:APECO1_1727"/>
<dbReference type="HOGENOM" id="CLU_025400_2_0_6"/>
<dbReference type="UniPathway" id="UPA00098">
    <property type="reaction ID" value="UER00359"/>
</dbReference>
<dbReference type="Proteomes" id="UP000008216">
    <property type="component" value="Chromosome"/>
</dbReference>
<dbReference type="GO" id="GO:0005829">
    <property type="term" value="C:cytosol"/>
    <property type="evidence" value="ECO:0007669"/>
    <property type="project" value="TreeGrafter"/>
</dbReference>
<dbReference type="GO" id="GO:0005524">
    <property type="term" value="F:ATP binding"/>
    <property type="evidence" value="ECO:0007669"/>
    <property type="project" value="UniProtKB-KW"/>
</dbReference>
<dbReference type="GO" id="GO:0004349">
    <property type="term" value="F:glutamate 5-kinase activity"/>
    <property type="evidence" value="ECO:0007669"/>
    <property type="project" value="UniProtKB-UniRule"/>
</dbReference>
<dbReference type="GO" id="GO:0003723">
    <property type="term" value="F:RNA binding"/>
    <property type="evidence" value="ECO:0007669"/>
    <property type="project" value="InterPro"/>
</dbReference>
<dbReference type="GO" id="GO:0055129">
    <property type="term" value="P:L-proline biosynthetic process"/>
    <property type="evidence" value="ECO:0007669"/>
    <property type="project" value="UniProtKB-UniRule"/>
</dbReference>
<dbReference type="CDD" id="cd04242">
    <property type="entry name" value="AAK_G5K_ProB"/>
    <property type="match status" value="1"/>
</dbReference>
<dbReference type="CDD" id="cd21157">
    <property type="entry name" value="PUA_G5K"/>
    <property type="match status" value="1"/>
</dbReference>
<dbReference type="FunFam" id="2.30.130.10:FF:000003">
    <property type="entry name" value="Glutamate 5-kinase"/>
    <property type="match status" value="1"/>
</dbReference>
<dbReference type="FunFam" id="3.40.1160.10:FF:000006">
    <property type="entry name" value="Glutamate 5-kinase"/>
    <property type="match status" value="1"/>
</dbReference>
<dbReference type="Gene3D" id="3.40.1160.10">
    <property type="entry name" value="Acetylglutamate kinase-like"/>
    <property type="match status" value="2"/>
</dbReference>
<dbReference type="Gene3D" id="2.30.130.10">
    <property type="entry name" value="PUA domain"/>
    <property type="match status" value="1"/>
</dbReference>
<dbReference type="HAMAP" id="MF_00456">
    <property type="entry name" value="ProB"/>
    <property type="match status" value="1"/>
</dbReference>
<dbReference type="InterPro" id="IPR036393">
    <property type="entry name" value="AceGlu_kinase-like_sf"/>
</dbReference>
<dbReference type="InterPro" id="IPR001048">
    <property type="entry name" value="Asp/Glu/Uridylate_kinase"/>
</dbReference>
<dbReference type="InterPro" id="IPR041739">
    <property type="entry name" value="G5K_ProB"/>
</dbReference>
<dbReference type="InterPro" id="IPR001057">
    <property type="entry name" value="Glu/AcGlu_kinase"/>
</dbReference>
<dbReference type="InterPro" id="IPR011529">
    <property type="entry name" value="Glu_5kinase"/>
</dbReference>
<dbReference type="InterPro" id="IPR005715">
    <property type="entry name" value="Glu_5kinase/COase_Synthase"/>
</dbReference>
<dbReference type="InterPro" id="IPR019797">
    <property type="entry name" value="Glutamate_5-kinase_CS"/>
</dbReference>
<dbReference type="InterPro" id="IPR002478">
    <property type="entry name" value="PUA"/>
</dbReference>
<dbReference type="InterPro" id="IPR015947">
    <property type="entry name" value="PUA-like_sf"/>
</dbReference>
<dbReference type="InterPro" id="IPR036974">
    <property type="entry name" value="PUA_sf"/>
</dbReference>
<dbReference type="NCBIfam" id="TIGR01027">
    <property type="entry name" value="proB"/>
    <property type="match status" value="1"/>
</dbReference>
<dbReference type="PANTHER" id="PTHR43654">
    <property type="entry name" value="GLUTAMATE 5-KINASE"/>
    <property type="match status" value="1"/>
</dbReference>
<dbReference type="PANTHER" id="PTHR43654:SF1">
    <property type="entry name" value="ISOPENTENYL PHOSPHATE KINASE"/>
    <property type="match status" value="1"/>
</dbReference>
<dbReference type="Pfam" id="PF00696">
    <property type="entry name" value="AA_kinase"/>
    <property type="match status" value="1"/>
</dbReference>
<dbReference type="Pfam" id="PF01472">
    <property type="entry name" value="PUA"/>
    <property type="match status" value="1"/>
</dbReference>
<dbReference type="PIRSF" id="PIRSF000729">
    <property type="entry name" value="GK"/>
    <property type="match status" value="1"/>
</dbReference>
<dbReference type="PRINTS" id="PR00474">
    <property type="entry name" value="GLU5KINASE"/>
</dbReference>
<dbReference type="SMART" id="SM00359">
    <property type="entry name" value="PUA"/>
    <property type="match status" value="1"/>
</dbReference>
<dbReference type="SUPFAM" id="SSF53633">
    <property type="entry name" value="Carbamate kinase-like"/>
    <property type="match status" value="1"/>
</dbReference>
<dbReference type="SUPFAM" id="SSF88697">
    <property type="entry name" value="PUA domain-like"/>
    <property type="match status" value="1"/>
</dbReference>
<dbReference type="PROSITE" id="PS00902">
    <property type="entry name" value="GLUTAMATE_5_KINASE"/>
    <property type="match status" value="1"/>
</dbReference>
<dbReference type="PROSITE" id="PS50890">
    <property type="entry name" value="PUA"/>
    <property type="match status" value="1"/>
</dbReference>
<organism>
    <name type="scientific">Escherichia coli O1:K1 / APEC</name>
    <dbReference type="NCBI Taxonomy" id="405955"/>
    <lineage>
        <taxon>Bacteria</taxon>
        <taxon>Pseudomonadati</taxon>
        <taxon>Pseudomonadota</taxon>
        <taxon>Gammaproteobacteria</taxon>
        <taxon>Enterobacterales</taxon>
        <taxon>Enterobacteriaceae</taxon>
        <taxon>Escherichia</taxon>
    </lineage>
</organism>
<keyword id="KW-0028">Amino-acid biosynthesis</keyword>
<keyword id="KW-0067">ATP-binding</keyword>
<keyword id="KW-0963">Cytoplasm</keyword>
<keyword id="KW-0418">Kinase</keyword>
<keyword id="KW-0547">Nucleotide-binding</keyword>
<keyword id="KW-0641">Proline biosynthesis</keyword>
<keyword id="KW-1185">Reference proteome</keyword>
<keyword id="KW-0808">Transferase</keyword>
<accession>A1A7V3</accession>
<name>PROB_ECOK1</name>
<sequence length="367" mass="39057">MSDSQTLVVKLGTSVLTGGSRRLNRAHIVELVRQCAQLHAAGHRIVIVTSGAIAAGREHLGYPELPATIASKQLLAAVGQSRLIQLWEQLFSIYGIHVGQMLLTRADMEDRERFLNARDTLRALLDNNIVPVINENDAVATAEIKVGDNDNLSALAAILAGADKLLLLTDQKGLYTADPRSNPQAELIKDVYGIDDALRAIAGDSVSGLGTGGMSTKLQAADVACRAGIDTIIAAGSKPGVIGDVMEGISVGTLFHAQATPLENRKRWIFGAPPAGEITVDEGATAAILERGSSLLPKGIKSVTGNFSRGEVIRICNLEGRDIAHGVSRYNSDALRRIAGHHSQEIDAILGYEYGPVAVHRDDMITR</sequence>
<feature type="chain" id="PRO_1000081058" description="Glutamate 5-kinase">
    <location>
        <begin position="1"/>
        <end position="367"/>
    </location>
</feature>
<feature type="domain" description="PUA" evidence="1">
    <location>
        <begin position="275"/>
        <end position="353"/>
    </location>
</feature>
<feature type="binding site" evidence="1">
    <location>
        <position position="10"/>
    </location>
    <ligand>
        <name>ATP</name>
        <dbReference type="ChEBI" id="CHEBI:30616"/>
    </ligand>
</feature>
<feature type="binding site" evidence="1">
    <location>
        <position position="50"/>
    </location>
    <ligand>
        <name>substrate</name>
    </ligand>
</feature>
<feature type="binding site" evidence="1">
    <location>
        <position position="137"/>
    </location>
    <ligand>
        <name>substrate</name>
    </ligand>
</feature>
<feature type="binding site" evidence="1">
    <location>
        <position position="149"/>
    </location>
    <ligand>
        <name>substrate</name>
    </ligand>
</feature>
<feature type="binding site" evidence="1">
    <location>
        <begin position="169"/>
        <end position="170"/>
    </location>
    <ligand>
        <name>ATP</name>
        <dbReference type="ChEBI" id="CHEBI:30616"/>
    </ligand>
</feature>
<feature type="binding site" evidence="1">
    <location>
        <begin position="211"/>
        <end position="217"/>
    </location>
    <ligand>
        <name>ATP</name>
        <dbReference type="ChEBI" id="CHEBI:30616"/>
    </ligand>
</feature>
<reference key="1">
    <citation type="journal article" date="2007" name="J. Bacteriol.">
        <title>The genome sequence of avian pathogenic Escherichia coli strain O1:K1:H7 shares strong similarities with human extraintestinal pathogenic E. coli genomes.</title>
        <authorList>
            <person name="Johnson T.J."/>
            <person name="Kariyawasam S."/>
            <person name="Wannemuehler Y."/>
            <person name="Mangiamele P."/>
            <person name="Johnson S.J."/>
            <person name="Doetkott C."/>
            <person name="Skyberg J.A."/>
            <person name="Lynne A.M."/>
            <person name="Johnson J.R."/>
            <person name="Nolan L.K."/>
        </authorList>
    </citation>
    <scope>NUCLEOTIDE SEQUENCE [LARGE SCALE GENOMIC DNA]</scope>
</reference>
<proteinExistence type="inferred from homology"/>
<comment type="function">
    <text evidence="1">Catalyzes the transfer of a phosphate group to glutamate to form L-glutamate 5-phosphate.</text>
</comment>
<comment type="catalytic activity">
    <reaction evidence="1">
        <text>L-glutamate + ATP = L-glutamyl 5-phosphate + ADP</text>
        <dbReference type="Rhea" id="RHEA:14877"/>
        <dbReference type="ChEBI" id="CHEBI:29985"/>
        <dbReference type="ChEBI" id="CHEBI:30616"/>
        <dbReference type="ChEBI" id="CHEBI:58274"/>
        <dbReference type="ChEBI" id="CHEBI:456216"/>
        <dbReference type="EC" id="2.7.2.11"/>
    </reaction>
</comment>
<comment type="pathway">
    <text evidence="1">Amino-acid biosynthesis; L-proline biosynthesis; L-glutamate 5-semialdehyde from L-glutamate: step 1/2.</text>
</comment>
<comment type="subcellular location">
    <subcellularLocation>
        <location evidence="1">Cytoplasm</location>
    </subcellularLocation>
</comment>
<comment type="similarity">
    <text evidence="1">Belongs to the glutamate 5-kinase family.</text>
</comment>